<accession>Q32BX2</accession>
<keyword id="KW-0131">Cell cycle</keyword>
<keyword id="KW-0132">Cell division</keyword>
<keyword id="KW-0175">Coiled coil</keyword>
<keyword id="KW-0963">Cytoplasm</keyword>
<keyword id="KW-1185">Reference proteome</keyword>
<keyword id="KW-0717">Septation</keyword>
<protein>
    <recommendedName>
        <fullName evidence="1">Cell division protein ZapA</fullName>
    </recommendedName>
    <alternativeName>
        <fullName evidence="1">Z ring-associated protein ZapA</fullName>
    </alternativeName>
</protein>
<dbReference type="EMBL" id="CP000034">
    <property type="protein sequence ID" value="ABB63183.1"/>
    <property type="molecule type" value="Genomic_DNA"/>
</dbReference>
<dbReference type="RefSeq" id="WP_001276009.1">
    <property type="nucleotide sequence ID" value="NC_007606.1"/>
</dbReference>
<dbReference type="RefSeq" id="YP_404674.1">
    <property type="nucleotide sequence ID" value="NC_007606.1"/>
</dbReference>
<dbReference type="SMR" id="Q32BX2"/>
<dbReference type="STRING" id="300267.SDY_3171"/>
<dbReference type="EnsemblBacteria" id="ABB63183">
    <property type="protein sequence ID" value="ABB63183"/>
    <property type="gene ID" value="SDY_3171"/>
</dbReference>
<dbReference type="KEGG" id="sdy:SDY_3171"/>
<dbReference type="PATRIC" id="fig|300267.13.peg.3789"/>
<dbReference type="HOGENOM" id="CLU_116623_3_0_6"/>
<dbReference type="Proteomes" id="UP000002716">
    <property type="component" value="Chromosome"/>
</dbReference>
<dbReference type="GO" id="GO:0032153">
    <property type="term" value="C:cell division site"/>
    <property type="evidence" value="ECO:0007669"/>
    <property type="project" value="TreeGrafter"/>
</dbReference>
<dbReference type="GO" id="GO:0030428">
    <property type="term" value="C:cell septum"/>
    <property type="evidence" value="ECO:0007669"/>
    <property type="project" value="TreeGrafter"/>
</dbReference>
<dbReference type="GO" id="GO:0005829">
    <property type="term" value="C:cytosol"/>
    <property type="evidence" value="ECO:0007669"/>
    <property type="project" value="TreeGrafter"/>
</dbReference>
<dbReference type="GO" id="GO:0005886">
    <property type="term" value="C:plasma membrane"/>
    <property type="evidence" value="ECO:0007669"/>
    <property type="project" value="UniProtKB-UniRule"/>
</dbReference>
<dbReference type="GO" id="GO:0000917">
    <property type="term" value="P:division septum assembly"/>
    <property type="evidence" value="ECO:0007669"/>
    <property type="project" value="UniProtKB-KW"/>
</dbReference>
<dbReference type="GO" id="GO:0043093">
    <property type="term" value="P:FtsZ-dependent cytokinesis"/>
    <property type="evidence" value="ECO:0007669"/>
    <property type="project" value="TreeGrafter"/>
</dbReference>
<dbReference type="GO" id="GO:0000921">
    <property type="term" value="P:septin ring assembly"/>
    <property type="evidence" value="ECO:0007669"/>
    <property type="project" value="TreeGrafter"/>
</dbReference>
<dbReference type="FunFam" id="1.20.5.50:FF:000001">
    <property type="entry name" value="Cell division protein ZapA"/>
    <property type="match status" value="1"/>
</dbReference>
<dbReference type="FunFam" id="3.30.160.880:FF:000001">
    <property type="entry name" value="Cell division protein ZapA"/>
    <property type="match status" value="1"/>
</dbReference>
<dbReference type="Gene3D" id="1.20.5.50">
    <property type="match status" value="1"/>
</dbReference>
<dbReference type="Gene3D" id="3.30.160.880">
    <property type="entry name" value="Cell division protein ZapA protomer, N-terminal domain"/>
    <property type="match status" value="1"/>
</dbReference>
<dbReference type="HAMAP" id="MF_02012">
    <property type="entry name" value="ZapA_type1"/>
    <property type="match status" value="1"/>
</dbReference>
<dbReference type="InterPro" id="IPR007838">
    <property type="entry name" value="Cell_div_ZapA-like"/>
</dbReference>
<dbReference type="InterPro" id="IPR036192">
    <property type="entry name" value="Cell_div_ZapA-like_sf"/>
</dbReference>
<dbReference type="InterPro" id="IPR023771">
    <property type="entry name" value="Cell_div_ZapA_eubact"/>
</dbReference>
<dbReference type="InterPro" id="IPR042233">
    <property type="entry name" value="Cell_div_ZapA_N"/>
</dbReference>
<dbReference type="NCBIfam" id="NF008209">
    <property type="entry name" value="PRK10972.1"/>
    <property type="match status" value="1"/>
</dbReference>
<dbReference type="PANTHER" id="PTHR34981">
    <property type="entry name" value="CELL DIVISION PROTEIN ZAPA"/>
    <property type="match status" value="1"/>
</dbReference>
<dbReference type="PANTHER" id="PTHR34981:SF1">
    <property type="entry name" value="CELL DIVISION PROTEIN ZAPA"/>
    <property type="match status" value="1"/>
</dbReference>
<dbReference type="Pfam" id="PF05164">
    <property type="entry name" value="ZapA"/>
    <property type="match status" value="1"/>
</dbReference>
<dbReference type="SUPFAM" id="SSF102829">
    <property type="entry name" value="Cell division protein ZapA-like"/>
    <property type="match status" value="1"/>
</dbReference>
<gene>
    <name evidence="1" type="primary">zapA</name>
    <name type="ordered locus">SDY_3171</name>
</gene>
<sequence>MSAQPVDIQIFGRSLRVNCPPDQRDALNQAADDLNQRLQDLKERTRVTNTEQLVFIAALNISYELAQEKAKTRDYAASMEQRIRMLQQTIEQALLERGRITEKTNQNFE</sequence>
<organism>
    <name type="scientific">Shigella dysenteriae serotype 1 (strain Sd197)</name>
    <dbReference type="NCBI Taxonomy" id="300267"/>
    <lineage>
        <taxon>Bacteria</taxon>
        <taxon>Pseudomonadati</taxon>
        <taxon>Pseudomonadota</taxon>
        <taxon>Gammaproteobacteria</taxon>
        <taxon>Enterobacterales</taxon>
        <taxon>Enterobacteriaceae</taxon>
        <taxon>Shigella</taxon>
    </lineage>
</organism>
<reference key="1">
    <citation type="journal article" date="2005" name="Nucleic Acids Res.">
        <title>Genome dynamics and diversity of Shigella species, the etiologic agents of bacillary dysentery.</title>
        <authorList>
            <person name="Yang F."/>
            <person name="Yang J."/>
            <person name="Zhang X."/>
            <person name="Chen L."/>
            <person name="Jiang Y."/>
            <person name="Yan Y."/>
            <person name="Tang X."/>
            <person name="Wang J."/>
            <person name="Xiong Z."/>
            <person name="Dong J."/>
            <person name="Xue Y."/>
            <person name="Zhu Y."/>
            <person name="Xu X."/>
            <person name="Sun L."/>
            <person name="Chen S."/>
            <person name="Nie H."/>
            <person name="Peng J."/>
            <person name="Xu J."/>
            <person name="Wang Y."/>
            <person name="Yuan Z."/>
            <person name="Wen Y."/>
            <person name="Yao Z."/>
            <person name="Shen Y."/>
            <person name="Qiang B."/>
            <person name="Hou Y."/>
            <person name="Yu J."/>
            <person name="Jin Q."/>
        </authorList>
    </citation>
    <scope>NUCLEOTIDE SEQUENCE [LARGE SCALE GENOMIC DNA]</scope>
    <source>
        <strain>Sd197</strain>
    </source>
</reference>
<comment type="function">
    <text evidence="1">Activator of cell division through the inhibition of FtsZ GTPase activity, therefore promoting FtsZ assembly into bundles of protofilaments necessary for the formation of the division Z ring. It is recruited early at mid-cell but it is not essential for cell division.</text>
</comment>
<comment type="subunit">
    <text evidence="1">Homodimer. Interacts with FtsZ.</text>
</comment>
<comment type="subcellular location">
    <subcellularLocation>
        <location evidence="1">Cytoplasm</location>
    </subcellularLocation>
    <text evidence="1">Localizes at mid-cell.</text>
</comment>
<comment type="similarity">
    <text evidence="1">Belongs to the ZapA family. Type 1 subfamily.</text>
</comment>
<feature type="chain" id="PRO_0000345661" description="Cell division protein ZapA">
    <location>
        <begin position="1"/>
        <end position="109"/>
    </location>
</feature>
<feature type="coiled-coil region" evidence="1">
    <location>
        <begin position="21"/>
        <end position="100"/>
    </location>
</feature>
<evidence type="ECO:0000255" key="1">
    <source>
        <dbReference type="HAMAP-Rule" id="MF_02012"/>
    </source>
</evidence>
<name>ZAPA_SHIDS</name>
<proteinExistence type="inferred from homology"/>